<protein>
    <recommendedName>
        <fullName>Nucleoprotein</fullName>
    </recommendedName>
    <alternativeName>
        <fullName>Nucleocapsid protein</fullName>
        <shortName>NP</shortName>
        <shortName>Protein N</shortName>
    </alternativeName>
</protein>
<reference key="1">
    <citation type="journal article" date="1994" name="Virology">
        <title>Evolution of the nucleoprotein and matrix genes from wild-type strains of measles virus isolated from recent epidemics.</title>
        <authorList>
            <person name="Rota P.A."/>
            <person name="Bloom A.E."/>
            <person name="Vanchiere J.A."/>
            <person name="Bellini W.J."/>
        </authorList>
    </citation>
    <scope>NUCLEOTIDE SEQUENCE [MRNA]</scope>
</reference>
<reference key="2">
    <citation type="journal article" date="2001" name="J. Virol.">
        <title>Comparison of predicted amino acid sequences of measles virus strains in the Edmonston vaccine lineage.</title>
        <authorList>
            <person name="Parks C.L."/>
            <person name="Lerch R.A."/>
            <person name="Walpita P."/>
            <person name="Wang H.P."/>
            <person name="Sidhu M.S."/>
            <person name="Udem S.A."/>
        </authorList>
    </citation>
    <scope>NUCLEOTIDE SEQUENCE [GENOMIC RNA]</scope>
</reference>
<reference key="3">
    <citation type="journal article" date="2004" name="J. Virol.">
        <title>Characterization of nucleocapsid binding by the measles virus and mumps virus phosphoproteins.</title>
        <authorList>
            <person name="Kingston R.L."/>
            <person name="Baase W.A."/>
            <person name="Gay L.S."/>
        </authorList>
    </citation>
    <scope>INTERACTION WITH PHOSPHOPROTEIN</scope>
</reference>
<reference key="4">
    <citation type="journal article" date="2019" name="J. Virol.">
        <title>Measles Virus Forms Inclusion Bodies with Properties of Liquid Organelles.</title>
        <authorList>
            <person name="Zhou Y."/>
            <person name="Su J.M."/>
            <person name="Samuel C.E."/>
            <person name="Ma D."/>
        </authorList>
    </citation>
    <scope>FUNCTION</scope>
</reference>
<reference evidence="16" key="5">
    <citation type="journal article" date="2004" name="Proc. Natl. Acad. Sci. U.S.A.">
        <title>Structural basis for the attachment of a paramyxoviral polymerase to its template.</title>
        <authorList>
            <person name="Kingston R.L."/>
            <person name="Hamel D.J."/>
            <person name="Gay L.S."/>
            <person name="Dahlquist F.W."/>
            <person name="Matthews B.W."/>
        </authorList>
    </citation>
    <scope>X-RAY CRYSTALLOGRAPHY (2.00 ANGSTROMS) OF 486-505</scope>
    <scope>DOMAIN</scope>
    <scope>INTERACTION WITH THE PHOSPHOPROTEIN</scope>
</reference>
<reference evidence="17" key="6">
    <citation type="journal article" date="2019" name="Proc. Natl. Acad. Sci. U.S.A.">
        <title>Assembly and cryo-EM structures of RNA-specific measles virus nucleocapsids provide mechanistic insight into paramyxoviral replication.</title>
        <authorList>
            <person name="Desfosses A."/>
            <person name="Milles S."/>
            <person name="Jensen M.R."/>
            <person name="Guseva S."/>
            <person name="Colletier J.P."/>
            <person name="Maurin D."/>
            <person name="Schoehn G."/>
            <person name="Gutsche I."/>
            <person name="Ruigrok R.W.H."/>
            <person name="Blackledge M."/>
        </authorList>
    </citation>
    <scope>STRUCTURE BY ELECTRON MICROSCOPY (3.30 ANGSTROMS) OF 1-405 IN COMPLEX WITH RNA</scope>
    <scope>MUTAGENESIS OF ARG-195; GLN-202; GLU-263 AND ASN-351</scope>
    <scope>FUNCTION</scope>
</reference>
<feature type="chain" id="PRO_0000142658" description="Nucleoprotein">
    <location>
        <begin position="1"/>
        <end position="525"/>
    </location>
</feature>
<feature type="region of interest" description="Ncore" evidence="3">
    <location>
        <begin position="1"/>
        <end position="403"/>
    </location>
</feature>
<feature type="region of interest" description="RNA packaging and organization of the helical nucleocapsid" evidence="7">
    <location>
        <begin position="1"/>
        <end position="375"/>
    </location>
</feature>
<feature type="region of interest" description="Homomultimerization" evidence="5">
    <location>
        <begin position="1"/>
        <end position="36"/>
    </location>
</feature>
<feature type="region of interest" description="Homomultimerization" evidence="5">
    <location>
        <begin position="373"/>
        <end position="391"/>
    </location>
</feature>
<feature type="region of interest" description="Ntail" evidence="3">
    <location>
        <begin position="404"/>
        <end position="525"/>
    </location>
</feature>
<feature type="region of interest" description="Disordered" evidence="9">
    <location>
        <begin position="418"/>
        <end position="525"/>
    </location>
</feature>
<feature type="region of interest" description="Interaction with the phosphoprotein" evidence="11">
    <location>
        <begin position="477"/>
        <end position="505"/>
    </location>
</feature>
<feature type="short sequence motif" description="Nuclear localization signal" evidence="2">
    <location>
        <begin position="70"/>
        <end position="77"/>
    </location>
</feature>
<feature type="short sequence motif" description="Nuclear export signal" evidence="2">
    <location>
        <begin position="425"/>
        <end position="440"/>
    </location>
</feature>
<feature type="compositionally biased region" description="Basic and acidic residues" evidence="9">
    <location>
        <begin position="433"/>
        <end position="452"/>
    </location>
</feature>
<feature type="binding site" evidence="12">
    <location>
        <position position="180"/>
    </location>
    <ligand>
        <name>RNA</name>
        <dbReference type="ChEBI" id="CHEBI:33697"/>
    </ligand>
</feature>
<feature type="binding site" evidence="12">
    <location>
        <position position="195"/>
    </location>
    <ligand>
        <name>RNA</name>
        <dbReference type="ChEBI" id="CHEBI:33697"/>
    </ligand>
</feature>
<feature type="binding site" evidence="12">
    <location>
        <position position="202"/>
    </location>
    <ligand>
        <name>RNA</name>
        <dbReference type="ChEBI" id="CHEBI:33697"/>
    </ligand>
</feature>
<feature type="binding site" evidence="12">
    <location>
        <position position="260"/>
    </location>
    <ligand>
        <name>RNA</name>
        <dbReference type="ChEBI" id="CHEBI:33697"/>
    </ligand>
</feature>
<feature type="binding site" evidence="12">
    <location>
        <position position="351"/>
    </location>
    <ligand>
        <name>RNA</name>
        <dbReference type="ChEBI" id="CHEBI:33697"/>
    </ligand>
</feature>
<feature type="modified residue" description="Phosphothreonine; by host" evidence="8">
    <location>
        <position position="279"/>
    </location>
</feature>
<feature type="mutagenesis site" description="Complete loss of nucleocapsid assembly." evidence="12">
    <original>R</original>
    <variation>A</variation>
    <location>
        <position position="195"/>
    </location>
</feature>
<feature type="mutagenesis site" description="Poor and slower nucleocapsid assembly." evidence="12">
    <original>Q</original>
    <variation>A</variation>
    <location>
        <position position="202"/>
    </location>
</feature>
<feature type="mutagenesis site" description="Poor and slower nucleocapsid assembly." evidence="12">
    <original>E</original>
    <variation>A</variation>
    <location>
        <position position="263"/>
    </location>
</feature>
<feature type="mutagenesis site" description="Slower nucleocapsid assembly." evidence="12">
    <original>N</original>
    <variation>A</variation>
    <location>
        <position position="351"/>
    </location>
</feature>
<feature type="helix" evidence="19">
    <location>
        <begin position="3"/>
        <end position="12"/>
    </location>
</feature>
<feature type="turn" evidence="19">
    <location>
        <begin position="13"/>
        <end position="16"/>
    </location>
</feature>
<feature type="strand" evidence="19">
    <location>
        <begin position="34"/>
        <end position="40"/>
    </location>
</feature>
<feature type="helix" evidence="19">
    <location>
        <begin position="45"/>
        <end position="59"/>
    </location>
</feature>
<feature type="helix" evidence="19">
    <location>
        <begin position="66"/>
        <end position="76"/>
    </location>
</feature>
<feature type="turn" evidence="19">
    <location>
        <begin position="77"/>
        <end position="80"/>
    </location>
</feature>
<feature type="strand" evidence="19">
    <location>
        <begin position="81"/>
        <end position="83"/>
    </location>
</feature>
<feature type="helix" evidence="19">
    <location>
        <begin position="85"/>
        <end position="91"/>
    </location>
</feature>
<feature type="strand" evidence="19">
    <location>
        <begin position="98"/>
        <end position="106"/>
    </location>
</feature>
<feature type="strand" evidence="19">
    <location>
        <begin position="108"/>
        <end position="116"/>
    </location>
</feature>
<feature type="helix" evidence="19">
    <location>
        <begin position="128"/>
        <end position="131"/>
    </location>
</feature>
<feature type="strand" evidence="19">
    <location>
        <begin position="147"/>
        <end position="149"/>
    </location>
</feature>
<feature type="helix" evidence="19">
    <location>
        <begin position="160"/>
        <end position="171"/>
    </location>
</feature>
<feature type="turn" evidence="19">
    <location>
        <begin position="172"/>
        <end position="177"/>
    </location>
</feature>
<feature type="helix" evidence="19">
    <location>
        <begin position="178"/>
        <end position="180"/>
    </location>
</feature>
<feature type="strand" evidence="19">
    <location>
        <begin position="181"/>
        <end position="185"/>
    </location>
</feature>
<feature type="helix" evidence="19">
    <location>
        <begin position="186"/>
        <end position="188"/>
    </location>
</feature>
<feature type="helix" evidence="19">
    <location>
        <begin position="189"/>
        <end position="201"/>
    </location>
</feature>
<feature type="helix" evidence="19">
    <location>
        <begin position="213"/>
        <end position="225"/>
    </location>
</feature>
<feature type="helix" evidence="19">
    <location>
        <begin position="228"/>
        <end position="241"/>
    </location>
</feature>
<feature type="helix" evidence="19">
    <location>
        <begin position="249"/>
        <end position="257"/>
    </location>
</feature>
<feature type="helix" evidence="19">
    <location>
        <begin position="258"/>
        <end position="260"/>
    </location>
</feature>
<feature type="turn" evidence="19">
    <location>
        <begin position="261"/>
        <end position="265"/>
    </location>
</feature>
<feature type="helix" evidence="19">
    <location>
        <begin position="267"/>
        <end position="275"/>
    </location>
</feature>
<feature type="turn" evidence="19">
    <location>
        <begin position="276"/>
        <end position="279"/>
    </location>
</feature>
<feature type="helix" evidence="19">
    <location>
        <begin position="287"/>
        <end position="290"/>
    </location>
</feature>
<feature type="turn" evidence="19">
    <location>
        <begin position="291"/>
        <end position="293"/>
    </location>
</feature>
<feature type="helix" evidence="19">
    <location>
        <begin position="294"/>
        <end position="304"/>
    </location>
</feature>
<feature type="helix" evidence="19">
    <location>
        <begin position="307"/>
        <end position="312"/>
    </location>
</feature>
<feature type="turn" evidence="19">
    <location>
        <begin position="313"/>
        <end position="317"/>
    </location>
</feature>
<feature type="helix" evidence="19">
    <location>
        <begin position="319"/>
        <end position="322"/>
    </location>
</feature>
<feature type="helix" evidence="19">
    <location>
        <begin position="326"/>
        <end position="328"/>
    </location>
</feature>
<feature type="helix" evidence="19">
    <location>
        <begin position="330"/>
        <end position="343"/>
    </location>
</feature>
<feature type="helix" evidence="19">
    <location>
        <begin position="346"/>
        <end position="349"/>
    </location>
</feature>
<feature type="helix" evidence="19">
    <location>
        <begin position="359"/>
        <end position="371"/>
    </location>
</feature>
<feature type="strand" evidence="19">
    <location>
        <begin position="372"/>
        <end position="374"/>
    </location>
</feature>
<feature type="helix" evidence="18">
    <location>
        <begin position="486"/>
        <end position="502"/>
    </location>
</feature>
<dbReference type="EMBL" id="U01999">
    <property type="protein sequence ID" value="AAA18998.1"/>
    <property type="molecule type" value="mRNA"/>
</dbReference>
<dbReference type="EMBL" id="AF266287">
    <property type="protein sequence ID" value="AAF85667.1"/>
    <property type="molecule type" value="Genomic_RNA"/>
</dbReference>
<dbReference type="PIR" id="PQ0386">
    <property type="entry name" value="PQ0386"/>
</dbReference>
<dbReference type="PDB" id="1T6O">
    <property type="method" value="X-ray"/>
    <property type="resolution" value="2.00 A"/>
    <property type="chains" value="B=486-505"/>
</dbReference>
<dbReference type="PDB" id="6H5S">
    <property type="method" value="EM"/>
    <property type="resolution" value="3.30 A"/>
    <property type="chains" value="C=1-405"/>
</dbReference>
<dbReference type="PDBsum" id="1T6O"/>
<dbReference type="PDBsum" id="6H5S"/>
<dbReference type="BMRB" id="Q77M43"/>
<dbReference type="SMR" id="Q77M43"/>
<dbReference type="IntAct" id="Q77M43">
    <property type="interactions" value="1"/>
</dbReference>
<dbReference type="EvolutionaryTrace" id="Q77M43"/>
<dbReference type="Proteomes" id="UP000154340">
    <property type="component" value="Genome"/>
</dbReference>
<dbReference type="GO" id="GO:0019029">
    <property type="term" value="C:helical viral capsid"/>
    <property type="evidence" value="ECO:0007669"/>
    <property type="project" value="UniProtKB-KW"/>
</dbReference>
<dbReference type="GO" id="GO:0030430">
    <property type="term" value="C:host cell cytoplasm"/>
    <property type="evidence" value="ECO:0007669"/>
    <property type="project" value="UniProtKB-SubCell"/>
</dbReference>
<dbReference type="GO" id="GO:0042025">
    <property type="term" value="C:host cell nucleus"/>
    <property type="evidence" value="ECO:0007669"/>
    <property type="project" value="UniProtKB-SubCell"/>
</dbReference>
<dbReference type="GO" id="GO:1990904">
    <property type="term" value="C:ribonucleoprotein complex"/>
    <property type="evidence" value="ECO:0007669"/>
    <property type="project" value="UniProtKB-KW"/>
</dbReference>
<dbReference type="GO" id="GO:0019013">
    <property type="term" value="C:viral nucleocapsid"/>
    <property type="evidence" value="ECO:0007669"/>
    <property type="project" value="UniProtKB-KW"/>
</dbReference>
<dbReference type="GO" id="GO:0060090">
    <property type="term" value="F:molecular adaptor activity"/>
    <property type="evidence" value="ECO:0000353"/>
    <property type="project" value="DisProt"/>
</dbReference>
<dbReference type="GO" id="GO:0003723">
    <property type="term" value="F:RNA binding"/>
    <property type="evidence" value="ECO:0007669"/>
    <property type="project" value="UniProtKB-KW"/>
</dbReference>
<dbReference type="GO" id="GO:0005198">
    <property type="term" value="F:structural molecule activity"/>
    <property type="evidence" value="ECO:0007669"/>
    <property type="project" value="InterPro"/>
</dbReference>
<dbReference type="InterPro" id="IPR002021">
    <property type="entry name" value="Paramyx_ncap"/>
</dbReference>
<dbReference type="Pfam" id="PF00973">
    <property type="entry name" value="Paramyxo_ncap"/>
    <property type="match status" value="1"/>
</dbReference>
<proteinExistence type="evidence at protein level"/>
<evidence type="ECO:0000250" key="1">
    <source>
        <dbReference type="UniProtKB" id="O57286"/>
    </source>
</evidence>
<evidence type="ECO:0000250" key="2">
    <source>
        <dbReference type="UniProtKB" id="P04851"/>
    </source>
</evidence>
<evidence type="ECO:0000250" key="3">
    <source>
        <dbReference type="UniProtKB" id="P06159"/>
    </source>
</evidence>
<evidence type="ECO:0000250" key="4">
    <source>
        <dbReference type="UniProtKB" id="P0DXN6"/>
    </source>
</evidence>
<evidence type="ECO:0000250" key="5">
    <source>
        <dbReference type="UniProtKB" id="P10050"/>
    </source>
</evidence>
<evidence type="ECO:0000250" key="6">
    <source>
        <dbReference type="UniProtKB" id="Q07097"/>
    </source>
</evidence>
<evidence type="ECO:0000250" key="7">
    <source>
        <dbReference type="UniProtKB" id="Q89933"/>
    </source>
</evidence>
<evidence type="ECO:0000250" key="8">
    <source>
        <dbReference type="UniProtKB" id="Q9WMB5"/>
    </source>
</evidence>
<evidence type="ECO:0000256" key="9">
    <source>
        <dbReference type="SAM" id="MobiDB-lite"/>
    </source>
</evidence>
<evidence type="ECO:0000269" key="10">
    <source>
    </source>
</evidence>
<evidence type="ECO:0000269" key="11">
    <source>
    </source>
</evidence>
<evidence type="ECO:0000269" key="12">
    <source>
    </source>
</evidence>
<evidence type="ECO:0000269" key="13">
    <source>
    </source>
</evidence>
<evidence type="ECO:0000305" key="14"/>
<evidence type="ECO:0000305" key="15">
    <source>
    </source>
</evidence>
<evidence type="ECO:0007744" key="16">
    <source>
        <dbReference type="PDB" id="1T6O"/>
    </source>
</evidence>
<evidence type="ECO:0007744" key="17">
    <source>
        <dbReference type="PDB" id="6H5S"/>
    </source>
</evidence>
<evidence type="ECO:0007829" key="18">
    <source>
        <dbReference type="PDB" id="1T6O"/>
    </source>
</evidence>
<evidence type="ECO:0007829" key="19">
    <source>
        <dbReference type="PDB" id="6H5S"/>
    </source>
</evidence>
<sequence length="525" mass="58073">MATLLRSLALFKRNKDKPPITSGSGGAIRGIKHIIIVPIPGDSSITTRSRLLDRLVRLIGNPDVSGPKLTGALIGILSLFVESPGQLIQRITDDPDVSIRLLEVVQSDQSQSGLTFASRGTNMEDEADQYFSHDDPISSDQSRFGWFGNKEISDIEVQDPEGFNMILGTILAQIWVLLAKAVTAPDTAADSELRRWIKYTQQRRVVGEFRLERKWLDVVRNRIAEDLSLRRFMVALILDIKRTPGNKPRIAEMICDIDTYIVEAGLASFILTIKFGIETMYPALGLHEFAGELSTLESLMNLYQQMGETAPYMVILENSIQNKFSAGSYPLLWSYAMGVGVELENSMGGLNFGRSYFDPAYFRLGQEMVRRSAGKVSSTLASELGITAEDARLVSEIAMHTTEDKISRAVGPRQAQVSFLHGDQSENELPRLGGKEDRRVKQSRGEARESYRETGPSRASDARAAHLPTGTPLDIDTATESSQDPQDSRRSADALLRLQAMAGISEEQGSDTDTPIVYNDRNLLD</sequence>
<accession>Q77M43</accession>
<accession>Q89794</accession>
<gene>
    <name type="primary">N</name>
    <name type="synonym">NP</name>
</gene>
<organism>
    <name type="scientific">Measles virus (strain Edmonston-Moraten vaccine)</name>
    <name type="common">MeV</name>
    <name type="synonym">Subacute sclerose panencephalitis virus</name>
    <dbReference type="NCBI Taxonomy" id="132484"/>
    <lineage>
        <taxon>Viruses</taxon>
        <taxon>Riboviria</taxon>
        <taxon>Orthornavirae</taxon>
        <taxon>Negarnaviricota</taxon>
        <taxon>Haploviricotina</taxon>
        <taxon>Monjiviricetes</taxon>
        <taxon>Mononegavirales</taxon>
        <taxon>Paramyxoviridae</taxon>
        <taxon>Orthoparamyxovirinae</taxon>
        <taxon>Morbillivirus</taxon>
        <taxon>Morbillivirus hominis</taxon>
        <taxon>Measles morbillivirus</taxon>
    </lineage>
</organism>
<organismHost>
    <name type="scientific">Homo sapiens</name>
    <name type="common">Human</name>
    <dbReference type="NCBI Taxonomy" id="9606"/>
</organismHost>
<keyword id="KW-0002">3D-structure</keyword>
<keyword id="KW-0167">Capsid protein</keyword>
<keyword id="KW-1139">Helical capsid protein</keyword>
<keyword id="KW-1035">Host cytoplasm</keyword>
<keyword id="KW-1048">Host nucleus</keyword>
<keyword id="KW-0945">Host-virus interaction</keyword>
<keyword id="KW-0597">Phosphoprotein</keyword>
<keyword id="KW-0687">Ribonucleoprotein</keyword>
<keyword id="KW-0694">RNA-binding</keyword>
<keyword id="KW-0543">Viral nucleoprotein</keyword>
<keyword id="KW-0946">Virion</keyword>
<name>NCAP_MEASM</name>
<comment type="function">
    <text evidence="3 4 5 8 12 13">Forms the helical nucleocapsid (NC) in a ratio of 1 N per 6 ribonucleotides, protecting the genome from nucleases (PubMed:30787192). The nucleocapsid (NC) has a helical structure with either 12.35 or 11.64 N per turn, approximately 20 nm in diameter, with a hollow central cavity approximately 5 nm in diameter (By similarity). The encapsidated genomic RNA serves as template for transcription and replication; encapsidation by N is coupled to RNA synthesis (By similarity). Forms the encapsidation complex with the phosphoprotein protein P (By similarity). Before encapsidation, the newly synthesized free N protein, so-called N0, is chaperoned by P (By similarity). Participates, together with P, in the formation of viral factories (viroplasms), which are large inclusions in the host cytoplasm where replication takes place (PubMed:31375591). N is released in the blood following lysis of measles infected cells, it interacts then with human FCGR2B on immune cells, inducing apoptosis and blocking inflammatory immune response (By similarity).</text>
</comment>
<comment type="subunit">
    <text evidence="1 3 6 7 8 10 11 13 15">Homomultimer; forms the nucleocapsid (By similarity). Binds to viral genomic RNA (By similarity). N0 interacts (via Ncore) with the phosphoprotein (via N-terminus); this interaction allows P to chaperon N0 to avoid N polymerization and non-specific RNA binding before encapsidation (Probable). Interacts (via the Ntail) as N-RNA template with the phosphoprotein (via C-terminus XD); this interaction maintains the P/L complex anchored to the nucleocapsid template during the sequential transcription (PubMed:15159535). Interacts with the phosphoprotein; this interaction leads to the formation of membraneless organelles that function as viral replication factories (PubMed:15280472, PubMed:31375591). Interacts with human FCGR2B protein (By similarity). Interacts with human PPIA/CYPA and PPIB/CYPB (By similarity).</text>
</comment>
<comment type="interaction">
    <interactant intactId="EBI-21943629">
        <id>Q77M43</id>
    </interactant>
    <interactant intactId="EBI-21943616">
        <id>Q77M42</id>
        <label>P</label>
    </interactant>
    <organismsDiffer>false</organismsDiffer>
    <experiments>2</experiments>
</comment>
<comment type="subcellular location">
    <subcellularLocation>
        <location evidence="2">Virion</location>
    </subcellularLocation>
    <subcellularLocation>
        <location evidence="2">Host cytoplasm</location>
    </subcellularLocation>
    <subcellularLocation>
        <location evidence="2">Host nucleus</location>
    </subcellularLocation>
</comment>
<comment type="domain">
    <text evidence="7">Ncore is globular and carries regions required for N self-assembly and RNA-binding. Ntail is an intrinsically disordered monomeric domain in the C-terminus.</text>
</comment>
<comment type="PTM">
    <text evidence="8">Phosphorylation at Thr-279 is required for the formation of the nucleocapsid.</text>
</comment>
<comment type="similarity">
    <text evidence="14">Belongs to the paramyxoviruses nucleocapsid family.</text>
</comment>